<protein>
    <recommendedName>
        <fullName evidence="1">Protein-glutamine gamma-glutamyltransferase</fullName>
        <ecNumber evidence="1">2.3.2.13</ecNumber>
    </recommendedName>
    <alternativeName>
        <fullName evidence="1">Transglutaminase</fullName>
        <shortName evidence="1">TGase</shortName>
    </alternativeName>
</protein>
<reference key="1">
    <citation type="journal article" date="2008" name="Chem. Biol. Interact.">
        <title>Extending the Bacillus cereus group genomics to putative food-borne pathogens of different toxicity.</title>
        <authorList>
            <person name="Lapidus A."/>
            <person name="Goltsman E."/>
            <person name="Auger S."/>
            <person name="Galleron N."/>
            <person name="Segurens B."/>
            <person name="Dossat C."/>
            <person name="Land M.L."/>
            <person name="Broussolle V."/>
            <person name="Brillard J."/>
            <person name="Guinebretiere M.-H."/>
            <person name="Sanchis V."/>
            <person name="Nguen-the C."/>
            <person name="Lereclus D."/>
            <person name="Richardson P."/>
            <person name="Wincker P."/>
            <person name="Weissenbach J."/>
            <person name="Ehrlich S.D."/>
            <person name="Sorokin A."/>
        </authorList>
    </citation>
    <scope>NUCLEOTIDE SEQUENCE [LARGE SCALE GENOMIC DNA]</scope>
    <source>
        <strain>KBAB4</strain>
    </source>
</reference>
<gene>
    <name evidence="1" type="primary">tgl</name>
    <name type="ordered locus">BcerKBAB4_3789</name>
</gene>
<accession>A9VUC4</accession>
<comment type="function">
    <text evidence="1">Probably plays a role in the assembly of the spore coat proteins by catalyzing epsilon-(gamma-glutamyl)lysine cross-links.</text>
</comment>
<comment type="catalytic activity">
    <reaction evidence="1">
        <text>L-glutaminyl-[protein] + L-lysyl-[protein] = [protein]-L-lysyl-N(6)-5-L-glutamyl-[protein] + NH4(+)</text>
        <dbReference type="Rhea" id="RHEA:54816"/>
        <dbReference type="Rhea" id="RHEA-COMP:9752"/>
        <dbReference type="Rhea" id="RHEA-COMP:10207"/>
        <dbReference type="Rhea" id="RHEA-COMP:14005"/>
        <dbReference type="ChEBI" id="CHEBI:28938"/>
        <dbReference type="ChEBI" id="CHEBI:29969"/>
        <dbReference type="ChEBI" id="CHEBI:30011"/>
        <dbReference type="ChEBI" id="CHEBI:138370"/>
        <dbReference type="EC" id="2.3.2.13"/>
    </reaction>
</comment>
<comment type="similarity">
    <text evidence="1">Belongs to the bacillus TGase family.</text>
</comment>
<organism>
    <name type="scientific">Bacillus mycoides (strain KBAB4)</name>
    <name type="common">Bacillus weihenstephanensis</name>
    <dbReference type="NCBI Taxonomy" id="315730"/>
    <lineage>
        <taxon>Bacteria</taxon>
        <taxon>Bacillati</taxon>
        <taxon>Bacillota</taxon>
        <taxon>Bacilli</taxon>
        <taxon>Bacillales</taxon>
        <taxon>Bacillaceae</taxon>
        <taxon>Bacillus</taxon>
        <taxon>Bacillus cereus group</taxon>
    </lineage>
</organism>
<sequence length="276" mass="31590">MIVIGRSIVHPYITNEYEPFAAEKQQILSIMAGNQEVYSFRTADELSFDLNLRVNIITSALELFQSGFQFRTFQQSFCNPQFWERTSLGGFQLLPNIAPSIAIQDIFKNGKLYGTECATAMIIIFYKALLSLYEEKTFNRLFANLLLYTWDYDRDLKLITKTSGDIVPGDLVYFKNPQVNPATIEWQGENAIYLGNFFFYGHGVGVKTKEEIIYSLNERRIPYAFISAYLTDFITRIDSRMMSQYAPPNTPQTSIGFIPIRDDAIVATVGHTTTIY</sequence>
<dbReference type="EC" id="2.3.2.13" evidence="1"/>
<dbReference type="EMBL" id="CP000903">
    <property type="protein sequence ID" value="ABY44958.1"/>
    <property type="molecule type" value="Genomic_DNA"/>
</dbReference>
<dbReference type="RefSeq" id="WP_002014859.1">
    <property type="nucleotide sequence ID" value="NC_010184.1"/>
</dbReference>
<dbReference type="SMR" id="A9VUC4"/>
<dbReference type="KEGG" id="bwe:BcerKBAB4_3789"/>
<dbReference type="eggNOG" id="ENOG502Z8C5">
    <property type="taxonomic scope" value="Bacteria"/>
</dbReference>
<dbReference type="HOGENOM" id="CLU_088922_0_0_9"/>
<dbReference type="Proteomes" id="UP000002154">
    <property type="component" value="Chromosome"/>
</dbReference>
<dbReference type="GO" id="GO:0003810">
    <property type="term" value="F:protein-glutamine gamma-glutamyltransferase activity"/>
    <property type="evidence" value="ECO:0007669"/>
    <property type="project" value="UniProtKB-UniRule"/>
</dbReference>
<dbReference type="GO" id="GO:0030435">
    <property type="term" value="P:sporulation resulting in formation of a cellular spore"/>
    <property type="evidence" value="ECO:0007669"/>
    <property type="project" value="UniProtKB-UniRule"/>
</dbReference>
<dbReference type="HAMAP" id="MF_00727">
    <property type="entry name" value="Tgl"/>
    <property type="match status" value="1"/>
</dbReference>
<dbReference type="InterPro" id="IPR020916">
    <property type="entry name" value="Gln_gamma-glutamylTfrase_bac"/>
</dbReference>
<dbReference type="NCBIfam" id="NF002869">
    <property type="entry name" value="PRK03187.1"/>
    <property type="match status" value="1"/>
</dbReference>
<dbReference type="Pfam" id="PF20085">
    <property type="entry name" value="TGL"/>
    <property type="match status" value="1"/>
</dbReference>
<name>TGL_BACMK</name>
<keyword id="KW-0012">Acyltransferase</keyword>
<keyword id="KW-0749">Sporulation</keyword>
<keyword id="KW-0808">Transferase</keyword>
<proteinExistence type="inferred from homology"/>
<feature type="chain" id="PRO_1000197971" description="Protein-glutamine gamma-glutamyltransferase">
    <location>
        <begin position="1"/>
        <end position="276"/>
    </location>
</feature>
<evidence type="ECO:0000255" key="1">
    <source>
        <dbReference type="HAMAP-Rule" id="MF_00727"/>
    </source>
</evidence>